<comment type="function">
    <text evidence="1">Specifically methylates the adenine in position 1618 of 23S rRNA.</text>
</comment>
<comment type="catalytic activity">
    <reaction evidence="1">
        <text>adenosine(1618) in 23S rRNA + S-adenosyl-L-methionine = N(6)-methyladenosine(1618) in 23S rRNA + S-adenosyl-L-homocysteine + H(+)</text>
        <dbReference type="Rhea" id="RHEA:16497"/>
        <dbReference type="Rhea" id="RHEA-COMP:10229"/>
        <dbReference type="Rhea" id="RHEA-COMP:10231"/>
        <dbReference type="ChEBI" id="CHEBI:15378"/>
        <dbReference type="ChEBI" id="CHEBI:57856"/>
        <dbReference type="ChEBI" id="CHEBI:59789"/>
        <dbReference type="ChEBI" id="CHEBI:74411"/>
        <dbReference type="ChEBI" id="CHEBI:74449"/>
        <dbReference type="EC" id="2.1.1.181"/>
    </reaction>
</comment>
<comment type="subcellular location">
    <subcellularLocation>
        <location evidence="1">Cytoplasm</location>
    </subcellularLocation>
</comment>
<comment type="similarity">
    <text evidence="1">Belongs to the methyltransferase superfamily. METTL16/RlmF family.</text>
</comment>
<accession>Q4ZXI1</accession>
<name>RLMF_PSEU2</name>
<feature type="chain" id="PRO_0000349938" description="Ribosomal RNA large subunit methyltransferase F">
    <location>
        <begin position="1"/>
        <end position="328"/>
    </location>
</feature>
<feature type="region of interest" description="Disordered" evidence="2">
    <location>
        <begin position="1"/>
        <end position="31"/>
    </location>
</feature>
<dbReference type="EC" id="2.1.1.181" evidence="1"/>
<dbReference type="EMBL" id="CP000075">
    <property type="protein sequence ID" value="AAY36141.1"/>
    <property type="molecule type" value="Genomic_DNA"/>
</dbReference>
<dbReference type="RefSeq" id="WP_011266817.1">
    <property type="nucleotide sequence ID" value="NC_007005.1"/>
</dbReference>
<dbReference type="RefSeq" id="YP_234179.1">
    <property type="nucleotide sequence ID" value="NC_007005.1"/>
</dbReference>
<dbReference type="SMR" id="Q4ZXI1"/>
<dbReference type="STRING" id="205918.Psyr_1085"/>
<dbReference type="KEGG" id="psb:Psyr_1085"/>
<dbReference type="PATRIC" id="fig|205918.7.peg.1117"/>
<dbReference type="eggNOG" id="COG3129">
    <property type="taxonomic scope" value="Bacteria"/>
</dbReference>
<dbReference type="HOGENOM" id="CLU_027534_3_0_6"/>
<dbReference type="OrthoDB" id="1115728at2"/>
<dbReference type="Proteomes" id="UP000000426">
    <property type="component" value="Chromosome"/>
</dbReference>
<dbReference type="GO" id="GO:0005737">
    <property type="term" value="C:cytoplasm"/>
    <property type="evidence" value="ECO:0007669"/>
    <property type="project" value="UniProtKB-SubCell"/>
</dbReference>
<dbReference type="GO" id="GO:0052907">
    <property type="term" value="F:23S rRNA (adenine(1618)-N(6))-methyltransferase activity"/>
    <property type="evidence" value="ECO:0007669"/>
    <property type="project" value="UniProtKB-EC"/>
</dbReference>
<dbReference type="GO" id="GO:0070475">
    <property type="term" value="P:rRNA base methylation"/>
    <property type="evidence" value="ECO:0007669"/>
    <property type="project" value="TreeGrafter"/>
</dbReference>
<dbReference type="CDD" id="cd02440">
    <property type="entry name" value="AdoMet_MTases"/>
    <property type="match status" value="1"/>
</dbReference>
<dbReference type="Gene3D" id="3.40.50.150">
    <property type="entry name" value="Vaccinia Virus protein VP39"/>
    <property type="match status" value="1"/>
</dbReference>
<dbReference type="HAMAP" id="MF_01848">
    <property type="entry name" value="23SrRNA_methyltr_F"/>
    <property type="match status" value="1"/>
</dbReference>
<dbReference type="InterPro" id="IPR010286">
    <property type="entry name" value="METTL16/RlmF"/>
</dbReference>
<dbReference type="InterPro" id="IPR016909">
    <property type="entry name" value="rRNA_lsu_MeTfrase_F"/>
</dbReference>
<dbReference type="InterPro" id="IPR029063">
    <property type="entry name" value="SAM-dependent_MTases_sf"/>
</dbReference>
<dbReference type="NCBIfam" id="NF008725">
    <property type="entry name" value="PRK11727.1"/>
    <property type="match status" value="1"/>
</dbReference>
<dbReference type="PANTHER" id="PTHR13393:SF0">
    <property type="entry name" value="RNA N6-ADENOSINE-METHYLTRANSFERASE METTL16"/>
    <property type="match status" value="1"/>
</dbReference>
<dbReference type="PANTHER" id="PTHR13393">
    <property type="entry name" value="SAM-DEPENDENT METHYLTRANSFERASE"/>
    <property type="match status" value="1"/>
</dbReference>
<dbReference type="Pfam" id="PF05971">
    <property type="entry name" value="Methyltransf_10"/>
    <property type="match status" value="1"/>
</dbReference>
<dbReference type="PIRSF" id="PIRSF029038">
    <property type="entry name" value="Mtase_YbiN_prd"/>
    <property type="match status" value="1"/>
</dbReference>
<dbReference type="SUPFAM" id="SSF53335">
    <property type="entry name" value="S-adenosyl-L-methionine-dependent methyltransferases"/>
    <property type="match status" value="1"/>
</dbReference>
<evidence type="ECO:0000255" key="1">
    <source>
        <dbReference type="HAMAP-Rule" id="MF_01848"/>
    </source>
</evidence>
<evidence type="ECO:0000256" key="2">
    <source>
        <dbReference type="SAM" id="MobiDB-lite"/>
    </source>
</evidence>
<reference key="1">
    <citation type="journal article" date="2005" name="Proc. Natl. Acad. Sci. U.S.A.">
        <title>Comparison of the complete genome sequences of Pseudomonas syringae pv. syringae B728a and pv. tomato DC3000.</title>
        <authorList>
            <person name="Feil H."/>
            <person name="Feil W.S."/>
            <person name="Chain P."/>
            <person name="Larimer F."/>
            <person name="Dibartolo G."/>
            <person name="Copeland A."/>
            <person name="Lykidis A."/>
            <person name="Trong S."/>
            <person name="Nolan M."/>
            <person name="Goltsman E."/>
            <person name="Thiel J."/>
            <person name="Malfatti S."/>
            <person name="Loper J.E."/>
            <person name="Lapidus A."/>
            <person name="Detter J.C."/>
            <person name="Land M."/>
            <person name="Richardson P.M."/>
            <person name="Kyrpides N.C."/>
            <person name="Ivanova N."/>
            <person name="Lindow S.E."/>
        </authorList>
    </citation>
    <scope>NUCLEOTIDE SEQUENCE [LARGE SCALE GENOMIC DNA]</scope>
    <source>
        <strain>B728a</strain>
    </source>
</reference>
<keyword id="KW-0963">Cytoplasm</keyword>
<keyword id="KW-0489">Methyltransferase</keyword>
<keyword id="KW-0698">rRNA processing</keyword>
<keyword id="KW-0949">S-adenosyl-L-methionine</keyword>
<keyword id="KW-0808">Transferase</keyword>
<protein>
    <recommendedName>
        <fullName evidence="1">Ribosomal RNA large subunit methyltransferase F</fullName>
        <ecNumber evidence="1">2.1.1.181</ecNumber>
    </recommendedName>
    <alternativeName>
        <fullName evidence="1">23S rRNA mA1618 methyltransferase</fullName>
    </alternativeName>
    <alternativeName>
        <fullName evidence="1">rRNA adenine N-6-methyltransferase</fullName>
    </alternativeName>
</protein>
<proteinExistence type="inferred from homology"/>
<gene>
    <name evidence="1" type="primary">rlmF</name>
    <name type="ordered locus">Psyr_1085</name>
</gene>
<organism>
    <name type="scientific">Pseudomonas syringae pv. syringae (strain B728a)</name>
    <dbReference type="NCBI Taxonomy" id="205918"/>
    <lineage>
        <taxon>Bacteria</taxon>
        <taxon>Pseudomonadati</taxon>
        <taxon>Pseudomonadota</taxon>
        <taxon>Gammaproteobacteria</taxon>
        <taxon>Pseudomonadales</taxon>
        <taxon>Pseudomonadaceae</taxon>
        <taxon>Pseudomonas</taxon>
        <taxon>Pseudomonas syringae</taxon>
    </lineage>
</organism>
<sequence length="328" mass="36033">MTDTRKPPRKKPQRPAKPAAPREKATLHPRNRHQGQYDFAKLIKSSPELAAFVILNPYGKESIDFANPQAVRVFNRALLKAFYGIAHWDIPADYLCPPIPGRADYLHFLADLLAEDNEGVIPRGASIKALDIGTGANCIYPLLGHSDYGWQFVGSDIDSTAIAAATTIVKANGLSKAISVRQQANRRQILLGLLDSSERFHVSLCNPPFHASLEEAQRGSQRKWRALGKADPKRKLPVLNFGGQSQELWCDGGEIGFITQLIQESALLPSQVAWFSTLVSKASNLPPIHSALKKAGALEVKVVEMGQGQKQSRFVAWTFLDKAQRAPG</sequence>